<feature type="chain" id="PRO_0000203798" description="Protein MAK16 homolog B">
    <location>
        <begin position="1"/>
        <end position="304"/>
    </location>
</feature>
<feature type="region of interest" description="Disordered" evidence="2">
    <location>
        <begin position="190"/>
        <end position="304"/>
    </location>
</feature>
<feature type="compositionally biased region" description="Acidic residues" evidence="2">
    <location>
        <begin position="201"/>
        <end position="211"/>
    </location>
</feature>
<feature type="compositionally biased region" description="Acidic residues" evidence="2">
    <location>
        <begin position="218"/>
        <end position="233"/>
    </location>
</feature>
<feature type="compositionally biased region" description="Acidic residues" evidence="2">
    <location>
        <begin position="249"/>
        <end position="261"/>
    </location>
</feature>
<feature type="compositionally biased region" description="Basic residues" evidence="2">
    <location>
        <begin position="267"/>
        <end position="285"/>
    </location>
</feature>
<gene>
    <name type="primary">mak16-b</name>
    <name type="synonym">mak16l-b</name>
</gene>
<dbReference type="EMBL" id="BC043795">
    <property type="protein sequence ID" value="AAH43795.1"/>
    <property type="molecule type" value="mRNA"/>
</dbReference>
<dbReference type="RefSeq" id="NP_001080475.1">
    <property type="nucleotide sequence ID" value="NM_001087006.1"/>
</dbReference>
<dbReference type="SMR" id="Q7ZYG5"/>
<dbReference type="DNASU" id="380167"/>
<dbReference type="GeneID" id="380167"/>
<dbReference type="KEGG" id="xla:380167"/>
<dbReference type="AGR" id="Xenbase:XB-GENE-5928260"/>
<dbReference type="CTD" id="380167"/>
<dbReference type="Xenbase" id="XB-GENE-5928260">
    <property type="gene designation" value="mak16.S"/>
</dbReference>
<dbReference type="OrthoDB" id="10251342at2759"/>
<dbReference type="Proteomes" id="UP000186698">
    <property type="component" value="Chromosome 3S"/>
</dbReference>
<dbReference type="Bgee" id="380167">
    <property type="expression patterns" value="Expressed in neurula embryo and 19 other cell types or tissues"/>
</dbReference>
<dbReference type="GO" id="GO:0005730">
    <property type="term" value="C:nucleolus"/>
    <property type="evidence" value="ECO:0000318"/>
    <property type="project" value="GO_Central"/>
</dbReference>
<dbReference type="GO" id="GO:0030687">
    <property type="term" value="C:preribosome, large subunit precursor"/>
    <property type="evidence" value="ECO:0000318"/>
    <property type="project" value="GO_Central"/>
</dbReference>
<dbReference type="GO" id="GO:0000460">
    <property type="term" value="P:maturation of 5.8S rRNA"/>
    <property type="evidence" value="ECO:0000318"/>
    <property type="project" value="GO_Central"/>
</dbReference>
<dbReference type="GO" id="GO:0000470">
    <property type="term" value="P:maturation of LSU-rRNA"/>
    <property type="evidence" value="ECO:0000318"/>
    <property type="project" value="GO_Central"/>
</dbReference>
<dbReference type="FunFam" id="3.30.390.110:FF:000003">
    <property type="entry name" value="Protein MAK16 homolog"/>
    <property type="match status" value="1"/>
</dbReference>
<dbReference type="Gene3D" id="3.30.390.110">
    <property type="match status" value="1"/>
</dbReference>
<dbReference type="InterPro" id="IPR006958">
    <property type="entry name" value="Mak16"/>
</dbReference>
<dbReference type="InterPro" id="IPR029004">
    <property type="entry name" value="Ribosomal_eL28/Mak16"/>
</dbReference>
<dbReference type="PANTHER" id="PTHR23405">
    <property type="entry name" value="MAINTENANCE OF KILLER 16 MAK16 PROTEIN-RELATED"/>
    <property type="match status" value="1"/>
</dbReference>
<dbReference type="PANTHER" id="PTHR23405:SF4">
    <property type="entry name" value="PROTEIN MAK16 HOMOLOG"/>
    <property type="match status" value="1"/>
</dbReference>
<dbReference type="Pfam" id="PF04874">
    <property type="entry name" value="Mak16"/>
    <property type="match status" value="1"/>
</dbReference>
<dbReference type="Pfam" id="PF01778">
    <property type="entry name" value="Ribosomal_L28e"/>
    <property type="match status" value="1"/>
</dbReference>
<dbReference type="PIRSF" id="PIRSF003352">
    <property type="entry name" value="MAK16"/>
    <property type="match status" value="1"/>
</dbReference>
<name>MK16B_XENLA</name>
<accession>Q7ZYG5</accession>
<reference key="1">
    <citation type="submission" date="2003-01" db="EMBL/GenBank/DDBJ databases">
        <authorList>
            <consortium name="NIH - Xenopus Gene Collection (XGC) project"/>
        </authorList>
    </citation>
    <scope>NUCLEOTIDE SEQUENCE [LARGE SCALE MRNA]</scope>
    <source>
        <tissue>Embryo</tissue>
    </source>
</reference>
<evidence type="ECO:0000250" key="1"/>
<evidence type="ECO:0000256" key="2">
    <source>
        <dbReference type="SAM" id="MobiDB-lite"/>
    </source>
</evidence>
<evidence type="ECO:0000305" key="3"/>
<comment type="subcellular location">
    <subcellularLocation>
        <location evidence="1">Nucleus</location>
        <location evidence="1">Nucleolus</location>
    </subcellularLocation>
</comment>
<comment type="similarity">
    <text evidence="3">Belongs to the MAK16 family.</text>
</comment>
<keyword id="KW-0539">Nucleus</keyword>
<keyword id="KW-1185">Reference proteome</keyword>
<sequence>MQHDDVIWDVVGNKQFCSFKIKTKTQNFCRNEFNITGLCNRSACPLANSQYATIKEEKGICYLYMKTIERAAFPARMWERVRLSKNYEQALEQIDENLIYWPRFIRHKCKQRFTKITQYLIRIRKLTLKRQRKLVPLSRKVERREKRREEKALVAAQLDNAIEKELLERLKQGAYGDIYNFPIQAFDKALEQQDEASASESSDEEEEDDEESGKREFVEDDDVEESDLSDFEDMDKLGASSDEDKPSSESEEESSGEEDEKEEKAPKAKSKGKAPLKGHLIRKRPHVEIEYEQETEPQQKAKVT</sequence>
<protein>
    <recommendedName>
        <fullName>Protein MAK16 homolog B</fullName>
    </recommendedName>
    <alternativeName>
        <fullName>MAK16-like protein B</fullName>
    </alternativeName>
</protein>
<organism>
    <name type="scientific">Xenopus laevis</name>
    <name type="common">African clawed frog</name>
    <dbReference type="NCBI Taxonomy" id="8355"/>
    <lineage>
        <taxon>Eukaryota</taxon>
        <taxon>Metazoa</taxon>
        <taxon>Chordata</taxon>
        <taxon>Craniata</taxon>
        <taxon>Vertebrata</taxon>
        <taxon>Euteleostomi</taxon>
        <taxon>Amphibia</taxon>
        <taxon>Batrachia</taxon>
        <taxon>Anura</taxon>
        <taxon>Pipoidea</taxon>
        <taxon>Pipidae</taxon>
        <taxon>Xenopodinae</taxon>
        <taxon>Xenopus</taxon>
        <taxon>Xenopus</taxon>
    </lineage>
</organism>
<proteinExistence type="evidence at transcript level"/>